<reference key="1">
    <citation type="journal article" date="2005" name="Proc. Natl. Acad. Sci. U.S.A.">
        <title>Complete genome sequence of the probiotic lactic acid bacterium Lactobacillus acidophilus NCFM.</title>
        <authorList>
            <person name="Altermann E."/>
            <person name="Russell W.M."/>
            <person name="Azcarate-Peril M.A."/>
            <person name="Barrangou R."/>
            <person name="Buck B.L."/>
            <person name="McAuliffe O."/>
            <person name="Souther N."/>
            <person name="Dobson A."/>
            <person name="Duong T."/>
            <person name="Callanan M."/>
            <person name="Lick S."/>
            <person name="Hamrick A."/>
            <person name="Cano R."/>
            <person name="Klaenhammer T.R."/>
        </authorList>
    </citation>
    <scope>NUCLEOTIDE SEQUENCE [LARGE SCALE GENOMIC DNA]</scope>
    <source>
        <strain>ATCC 700396 / NCK56 / N2 / NCFM</strain>
    </source>
</reference>
<protein>
    <recommendedName>
        <fullName evidence="1">Large ribosomal subunit protein bL9</fullName>
    </recommendedName>
    <alternativeName>
        <fullName evidence="2">50S ribosomal protein L9</fullName>
    </alternativeName>
</protein>
<organism>
    <name type="scientific">Lactobacillus acidophilus (strain ATCC 700396 / NCK56 / N2 / NCFM)</name>
    <dbReference type="NCBI Taxonomy" id="272621"/>
    <lineage>
        <taxon>Bacteria</taxon>
        <taxon>Bacillati</taxon>
        <taxon>Bacillota</taxon>
        <taxon>Bacilli</taxon>
        <taxon>Lactobacillales</taxon>
        <taxon>Lactobacillaceae</taxon>
        <taxon>Lactobacillus</taxon>
    </lineage>
</organism>
<feature type="chain" id="PRO_0000236534" description="Large ribosomal subunit protein bL9">
    <location>
        <begin position="1"/>
        <end position="151"/>
    </location>
</feature>
<sequence>MKVIFTQDVRGRGKRGQVKDVPDGYAQNYLIKRGLAKEATKGNMNTLKRVEANEKAAYEAEKAEAERIKAELEKDDTIVEFKSKAGNDSRLFGSISSKKIVEGLEKQYGIKVDKRKLNLPEPIKTLGYTNVHAKLFKGVEATVRVHVTEQD</sequence>
<comment type="function">
    <text evidence="1">Binds to the 23S rRNA.</text>
</comment>
<comment type="similarity">
    <text evidence="1">Belongs to the bacterial ribosomal protein bL9 family.</text>
</comment>
<keyword id="KW-1185">Reference proteome</keyword>
<keyword id="KW-0687">Ribonucleoprotein</keyword>
<keyword id="KW-0689">Ribosomal protein</keyword>
<keyword id="KW-0694">RNA-binding</keyword>
<keyword id="KW-0699">rRNA-binding</keyword>
<accession>Q5FN05</accession>
<evidence type="ECO:0000255" key="1">
    <source>
        <dbReference type="HAMAP-Rule" id="MF_00503"/>
    </source>
</evidence>
<evidence type="ECO:0000305" key="2"/>
<name>RL9_LACAC</name>
<gene>
    <name evidence="1" type="primary">rplI</name>
    <name type="ordered locus">LBA0012</name>
</gene>
<proteinExistence type="inferred from homology"/>
<dbReference type="EMBL" id="CP000033">
    <property type="protein sequence ID" value="AAV41919.1"/>
    <property type="molecule type" value="Genomic_DNA"/>
</dbReference>
<dbReference type="RefSeq" id="WP_003549343.1">
    <property type="nucleotide sequence ID" value="NC_006814.3"/>
</dbReference>
<dbReference type="RefSeq" id="YP_192950.1">
    <property type="nucleotide sequence ID" value="NC_006814.3"/>
</dbReference>
<dbReference type="SMR" id="Q5FN05"/>
<dbReference type="STRING" id="272621.LBA0012"/>
<dbReference type="GeneID" id="93290876"/>
<dbReference type="KEGG" id="lac:LBA0012"/>
<dbReference type="PATRIC" id="fig|272621.13.peg.11"/>
<dbReference type="eggNOG" id="COG0359">
    <property type="taxonomic scope" value="Bacteria"/>
</dbReference>
<dbReference type="HOGENOM" id="CLU_078938_3_2_9"/>
<dbReference type="OrthoDB" id="9788336at2"/>
<dbReference type="BioCyc" id="LACI272621:G1G49-11-MONOMER"/>
<dbReference type="Proteomes" id="UP000006381">
    <property type="component" value="Chromosome"/>
</dbReference>
<dbReference type="GO" id="GO:1990904">
    <property type="term" value="C:ribonucleoprotein complex"/>
    <property type="evidence" value="ECO:0007669"/>
    <property type="project" value="UniProtKB-KW"/>
</dbReference>
<dbReference type="GO" id="GO:0005840">
    <property type="term" value="C:ribosome"/>
    <property type="evidence" value="ECO:0007669"/>
    <property type="project" value="UniProtKB-KW"/>
</dbReference>
<dbReference type="GO" id="GO:0019843">
    <property type="term" value="F:rRNA binding"/>
    <property type="evidence" value="ECO:0007669"/>
    <property type="project" value="UniProtKB-UniRule"/>
</dbReference>
<dbReference type="GO" id="GO:0003735">
    <property type="term" value="F:structural constituent of ribosome"/>
    <property type="evidence" value="ECO:0007669"/>
    <property type="project" value="InterPro"/>
</dbReference>
<dbReference type="GO" id="GO:0006412">
    <property type="term" value="P:translation"/>
    <property type="evidence" value="ECO:0007669"/>
    <property type="project" value="UniProtKB-UniRule"/>
</dbReference>
<dbReference type="FunFam" id="3.40.5.10:FF:000002">
    <property type="entry name" value="50S ribosomal protein L9"/>
    <property type="match status" value="1"/>
</dbReference>
<dbReference type="Gene3D" id="3.10.430.100">
    <property type="entry name" value="Ribosomal protein L9, C-terminal domain"/>
    <property type="match status" value="1"/>
</dbReference>
<dbReference type="Gene3D" id="3.40.5.10">
    <property type="entry name" value="Ribosomal protein L9, N-terminal domain"/>
    <property type="match status" value="1"/>
</dbReference>
<dbReference type="HAMAP" id="MF_00503">
    <property type="entry name" value="Ribosomal_bL9"/>
    <property type="match status" value="1"/>
</dbReference>
<dbReference type="InterPro" id="IPR000244">
    <property type="entry name" value="Ribosomal_bL9"/>
</dbReference>
<dbReference type="InterPro" id="IPR009027">
    <property type="entry name" value="Ribosomal_bL9/RNase_H1_N"/>
</dbReference>
<dbReference type="InterPro" id="IPR020594">
    <property type="entry name" value="Ribosomal_bL9_bac/chp"/>
</dbReference>
<dbReference type="InterPro" id="IPR020069">
    <property type="entry name" value="Ribosomal_bL9_C"/>
</dbReference>
<dbReference type="InterPro" id="IPR036791">
    <property type="entry name" value="Ribosomal_bL9_C_sf"/>
</dbReference>
<dbReference type="InterPro" id="IPR020070">
    <property type="entry name" value="Ribosomal_bL9_N"/>
</dbReference>
<dbReference type="InterPro" id="IPR036935">
    <property type="entry name" value="Ribosomal_bL9_N_sf"/>
</dbReference>
<dbReference type="NCBIfam" id="TIGR00158">
    <property type="entry name" value="L9"/>
    <property type="match status" value="1"/>
</dbReference>
<dbReference type="PANTHER" id="PTHR21368">
    <property type="entry name" value="50S RIBOSOMAL PROTEIN L9"/>
    <property type="match status" value="1"/>
</dbReference>
<dbReference type="Pfam" id="PF03948">
    <property type="entry name" value="Ribosomal_L9_C"/>
    <property type="match status" value="1"/>
</dbReference>
<dbReference type="Pfam" id="PF01281">
    <property type="entry name" value="Ribosomal_L9_N"/>
    <property type="match status" value="1"/>
</dbReference>
<dbReference type="SUPFAM" id="SSF55658">
    <property type="entry name" value="L9 N-domain-like"/>
    <property type="match status" value="1"/>
</dbReference>
<dbReference type="SUPFAM" id="SSF55653">
    <property type="entry name" value="Ribosomal protein L9 C-domain"/>
    <property type="match status" value="1"/>
</dbReference>
<dbReference type="PROSITE" id="PS00651">
    <property type="entry name" value="RIBOSOMAL_L9"/>
    <property type="match status" value="1"/>
</dbReference>